<organism>
    <name type="scientific">Campylobacter jejuni (strain RM1221)</name>
    <dbReference type="NCBI Taxonomy" id="195099"/>
    <lineage>
        <taxon>Bacteria</taxon>
        <taxon>Pseudomonadati</taxon>
        <taxon>Campylobacterota</taxon>
        <taxon>Epsilonproteobacteria</taxon>
        <taxon>Campylobacterales</taxon>
        <taxon>Campylobacteraceae</taxon>
        <taxon>Campylobacter</taxon>
    </lineage>
</organism>
<gene>
    <name evidence="1" type="primary">hisG</name>
    <name type="ordered locus">CJE1769</name>
</gene>
<feature type="chain" id="PRO_0000151840" description="ATP phosphoribosyltransferase">
    <location>
        <begin position="1"/>
        <end position="299"/>
    </location>
</feature>
<feature type="strand" evidence="3">
    <location>
        <begin position="7"/>
        <end position="15"/>
    </location>
</feature>
<feature type="helix" evidence="3">
    <location>
        <begin position="18"/>
        <end position="27"/>
    </location>
</feature>
<feature type="strand" evidence="3">
    <location>
        <begin position="36"/>
        <end position="53"/>
    </location>
</feature>
<feature type="helix" evidence="3">
    <location>
        <begin position="55"/>
        <end position="57"/>
    </location>
</feature>
<feature type="helix" evidence="3">
    <location>
        <begin position="58"/>
        <end position="63"/>
    </location>
</feature>
<feature type="strand" evidence="3">
    <location>
        <begin position="66"/>
        <end position="73"/>
    </location>
</feature>
<feature type="helix" evidence="3">
    <location>
        <begin position="74"/>
        <end position="86"/>
    </location>
</feature>
<feature type="strand" evidence="3">
    <location>
        <begin position="94"/>
        <end position="98"/>
    </location>
</feature>
<feature type="strand" evidence="3">
    <location>
        <begin position="104"/>
        <end position="111"/>
    </location>
</feature>
<feature type="helix" evidence="3">
    <location>
        <begin position="119"/>
        <end position="122"/>
    </location>
</feature>
<feature type="strand" evidence="3">
    <location>
        <begin position="126"/>
        <end position="130"/>
    </location>
</feature>
<feature type="helix" evidence="3">
    <location>
        <begin position="132"/>
        <end position="141"/>
    </location>
</feature>
<feature type="strand" evidence="3">
    <location>
        <begin position="147"/>
        <end position="150"/>
    </location>
</feature>
<feature type="helix" evidence="3">
    <location>
        <begin position="155"/>
        <end position="157"/>
    </location>
</feature>
<feature type="turn" evidence="3">
    <location>
        <begin position="158"/>
        <end position="162"/>
    </location>
</feature>
<feature type="strand" evidence="3">
    <location>
        <begin position="165"/>
        <end position="172"/>
    </location>
</feature>
<feature type="helix" evidence="3">
    <location>
        <begin position="178"/>
        <end position="180"/>
    </location>
</feature>
<feature type="strand" evidence="3">
    <location>
        <begin position="182"/>
        <end position="191"/>
    </location>
</feature>
<feature type="strand" evidence="3">
    <location>
        <begin position="193"/>
        <end position="197"/>
    </location>
</feature>
<feature type="helix" evidence="3">
    <location>
        <begin position="204"/>
        <end position="223"/>
    </location>
</feature>
<feature type="strand" evidence="2">
    <location>
        <begin position="226"/>
        <end position="234"/>
    </location>
</feature>
<feature type="helix" evidence="2">
    <location>
        <begin position="235"/>
        <end position="237"/>
    </location>
</feature>
<feature type="helix" evidence="2">
    <location>
        <begin position="238"/>
        <end position="244"/>
    </location>
</feature>
<feature type="strand" evidence="2">
    <location>
        <begin position="248"/>
        <end position="250"/>
    </location>
</feature>
<feature type="strand" evidence="2">
    <location>
        <begin position="252"/>
        <end position="256"/>
    </location>
</feature>
<feature type="strand" evidence="2">
    <location>
        <begin position="259"/>
        <end position="270"/>
    </location>
</feature>
<feature type="helix" evidence="2">
    <location>
        <begin position="271"/>
        <end position="283"/>
    </location>
</feature>
<feature type="strand" evidence="2">
    <location>
        <begin position="287"/>
        <end position="293"/>
    </location>
</feature>
<feature type="strand" evidence="2">
    <location>
        <begin position="295"/>
        <end position="298"/>
    </location>
</feature>
<reference key="1">
    <citation type="journal article" date="2005" name="PLoS Biol.">
        <title>Major structural differences and novel potential virulence mechanisms from the genomes of multiple Campylobacter species.</title>
        <authorList>
            <person name="Fouts D.E."/>
            <person name="Mongodin E.F."/>
            <person name="Mandrell R.E."/>
            <person name="Miller W.G."/>
            <person name="Rasko D.A."/>
            <person name="Ravel J."/>
            <person name="Brinkac L.M."/>
            <person name="DeBoy R.T."/>
            <person name="Parker C.T."/>
            <person name="Daugherty S.C."/>
            <person name="Dodson R.J."/>
            <person name="Durkin A.S."/>
            <person name="Madupu R."/>
            <person name="Sullivan S.A."/>
            <person name="Shetty J.U."/>
            <person name="Ayodeji M.A."/>
            <person name="Shvartsbeyn A."/>
            <person name="Schatz M.C."/>
            <person name="Badger J.H."/>
            <person name="Fraser C.M."/>
            <person name="Nelson K.E."/>
        </authorList>
    </citation>
    <scope>NUCLEOTIDE SEQUENCE [LARGE SCALE GENOMIC DNA]</scope>
    <source>
        <strain>RM1221</strain>
    </source>
</reference>
<dbReference type="EC" id="2.4.2.17" evidence="1"/>
<dbReference type="EMBL" id="CP000025">
    <property type="protein sequence ID" value="AAW36193.1"/>
    <property type="molecule type" value="Genomic_DNA"/>
</dbReference>
<dbReference type="RefSeq" id="WP_002858407.1">
    <property type="nucleotide sequence ID" value="NC_003912.7"/>
</dbReference>
<dbReference type="PDB" id="4YB5">
    <property type="method" value="X-ray"/>
    <property type="resolution" value="2.24 A"/>
    <property type="chains" value="A/B/C/D/E/F=1-299"/>
</dbReference>
<dbReference type="PDB" id="4YB6">
    <property type="method" value="X-ray"/>
    <property type="resolution" value="1.98 A"/>
    <property type="chains" value="A/B/C/D/E/F=1-299"/>
</dbReference>
<dbReference type="PDB" id="4YB7">
    <property type="method" value="X-ray"/>
    <property type="resolution" value="2.20 A"/>
    <property type="chains" value="A/B/C/D/E/F/G/H/I/J/K/L=1-299"/>
</dbReference>
<dbReference type="PDB" id="5UB9">
    <property type="method" value="X-ray"/>
    <property type="resolution" value="1.90 A"/>
    <property type="chains" value="A/B=1-225"/>
</dbReference>
<dbReference type="PDB" id="5UBG">
    <property type="method" value="X-ray"/>
    <property type="resolution" value="1.90 A"/>
    <property type="chains" value="A/B=1-225"/>
</dbReference>
<dbReference type="PDB" id="5UBH">
    <property type="method" value="X-ray"/>
    <property type="resolution" value="2.00 A"/>
    <property type="chains" value="A/B=1-225"/>
</dbReference>
<dbReference type="PDB" id="5UBI">
    <property type="method" value="X-ray"/>
    <property type="resolution" value="2.14 A"/>
    <property type="chains" value="A/B=1-225"/>
</dbReference>
<dbReference type="PDBsum" id="4YB5"/>
<dbReference type="PDBsum" id="4YB6"/>
<dbReference type="PDBsum" id="4YB7"/>
<dbReference type="PDBsum" id="5UB9"/>
<dbReference type="PDBsum" id="5UBG"/>
<dbReference type="PDBsum" id="5UBH"/>
<dbReference type="PDBsum" id="5UBI"/>
<dbReference type="SMR" id="Q5HSJ4"/>
<dbReference type="KEGG" id="cjr:CJE1769"/>
<dbReference type="HOGENOM" id="CLU_038115_1_0_7"/>
<dbReference type="BRENDA" id="2.4.2.17">
    <property type="organism ID" value="1087"/>
</dbReference>
<dbReference type="UniPathway" id="UPA00031">
    <property type="reaction ID" value="UER00006"/>
</dbReference>
<dbReference type="EvolutionaryTrace" id="Q5HSJ4"/>
<dbReference type="GO" id="GO:0005737">
    <property type="term" value="C:cytoplasm"/>
    <property type="evidence" value="ECO:0007669"/>
    <property type="project" value="UniProtKB-SubCell"/>
</dbReference>
<dbReference type="GO" id="GO:0005524">
    <property type="term" value="F:ATP binding"/>
    <property type="evidence" value="ECO:0007669"/>
    <property type="project" value="UniProtKB-KW"/>
</dbReference>
<dbReference type="GO" id="GO:0003879">
    <property type="term" value="F:ATP phosphoribosyltransferase activity"/>
    <property type="evidence" value="ECO:0007669"/>
    <property type="project" value="UniProtKB-UniRule"/>
</dbReference>
<dbReference type="GO" id="GO:0000287">
    <property type="term" value="F:magnesium ion binding"/>
    <property type="evidence" value="ECO:0007669"/>
    <property type="project" value="UniProtKB-UniRule"/>
</dbReference>
<dbReference type="GO" id="GO:0000105">
    <property type="term" value="P:L-histidine biosynthetic process"/>
    <property type="evidence" value="ECO:0007669"/>
    <property type="project" value="UniProtKB-UniRule"/>
</dbReference>
<dbReference type="CDD" id="cd13592">
    <property type="entry name" value="PBP2_HisGL2"/>
    <property type="match status" value="1"/>
</dbReference>
<dbReference type="FunFam" id="3.30.70.120:FF:000002">
    <property type="entry name" value="ATP phosphoribosyltransferase"/>
    <property type="match status" value="1"/>
</dbReference>
<dbReference type="FunFam" id="3.40.190.10:FF:000008">
    <property type="entry name" value="ATP phosphoribosyltransferase"/>
    <property type="match status" value="1"/>
</dbReference>
<dbReference type="Gene3D" id="3.30.70.120">
    <property type="match status" value="1"/>
</dbReference>
<dbReference type="Gene3D" id="3.40.190.10">
    <property type="entry name" value="Periplasmic binding protein-like II"/>
    <property type="match status" value="2"/>
</dbReference>
<dbReference type="HAMAP" id="MF_00079">
    <property type="entry name" value="HisG_Long"/>
    <property type="match status" value="1"/>
</dbReference>
<dbReference type="InterPro" id="IPR020621">
    <property type="entry name" value="ATP-PRT_HisG_long"/>
</dbReference>
<dbReference type="InterPro" id="IPR013820">
    <property type="entry name" value="ATP_PRibTrfase_cat"/>
</dbReference>
<dbReference type="InterPro" id="IPR018198">
    <property type="entry name" value="ATP_PRibTrfase_CS"/>
</dbReference>
<dbReference type="InterPro" id="IPR001348">
    <property type="entry name" value="ATP_PRibTrfase_HisG"/>
</dbReference>
<dbReference type="InterPro" id="IPR013115">
    <property type="entry name" value="HisG_C"/>
</dbReference>
<dbReference type="InterPro" id="IPR011322">
    <property type="entry name" value="N-reg_PII-like_a/b"/>
</dbReference>
<dbReference type="InterPro" id="IPR015867">
    <property type="entry name" value="N-reg_PII/ATP_PRibTrfase_C"/>
</dbReference>
<dbReference type="NCBIfam" id="TIGR00070">
    <property type="entry name" value="hisG"/>
    <property type="match status" value="1"/>
</dbReference>
<dbReference type="NCBIfam" id="TIGR03455">
    <property type="entry name" value="HisG_C-term"/>
    <property type="match status" value="1"/>
</dbReference>
<dbReference type="PANTHER" id="PTHR21403:SF8">
    <property type="entry name" value="ATP PHOSPHORIBOSYLTRANSFERASE"/>
    <property type="match status" value="1"/>
</dbReference>
<dbReference type="PANTHER" id="PTHR21403">
    <property type="entry name" value="ATP PHOSPHORIBOSYLTRANSFERASE ATP-PRTASE"/>
    <property type="match status" value="1"/>
</dbReference>
<dbReference type="Pfam" id="PF01634">
    <property type="entry name" value="HisG"/>
    <property type="match status" value="1"/>
</dbReference>
<dbReference type="Pfam" id="PF08029">
    <property type="entry name" value="HisG_C"/>
    <property type="match status" value="1"/>
</dbReference>
<dbReference type="SUPFAM" id="SSF54913">
    <property type="entry name" value="GlnB-like"/>
    <property type="match status" value="1"/>
</dbReference>
<dbReference type="SUPFAM" id="SSF53850">
    <property type="entry name" value="Periplasmic binding protein-like II"/>
    <property type="match status" value="1"/>
</dbReference>
<dbReference type="PROSITE" id="PS01316">
    <property type="entry name" value="ATP_P_PHORIBOSYLTR"/>
    <property type="match status" value="1"/>
</dbReference>
<protein>
    <recommendedName>
        <fullName evidence="1">ATP phosphoribosyltransferase</fullName>
        <shortName evidence="1">ATP-PRT</shortName>
        <shortName evidence="1">ATP-PRTase</shortName>
        <ecNumber evidence="1">2.4.2.17</ecNumber>
    </recommendedName>
</protein>
<comment type="function">
    <text evidence="1">Catalyzes the condensation of ATP and 5-phosphoribose 1-diphosphate to form N'-(5'-phosphoribosyl)-ATP (PR-ATP). Has a crucial role in the pathway because the rate of histidine biosynthesis seems to be controlled primarily by regulation of HisG enzymatic activity.</text>
</comment>
<comment type="catalytic activity">
    <reaction evidence="1">
        <text>1-(5-phospho-beta-D-ribosyl)-ATP + diphosphate = 5-phospho-alpha-D-ribose 1-diphosphate + ATP</text>
        <dbReference type="Rhea" id="RHEA:18473"/>
        <dbReference type="ChEBI" id="CHEBI:30616"/>
        <dbReference type="ChEBI" id="CHEBI:33019"/>
        <dbReference type="ChEBI" id="CHEBI:58017"/>
        <dbReference type="ChEBI" id="CHEBI:73183"/>
        <dbReference type="EC" id="2.4.2.17"/>
    </reaction>
</comment>
<comment type="cofactor">
    <cofactor evidence="1">
        <name>Mg(2+)</name>
        <dbReference type="ChEBI" id="CHEBI:18420"/>
    </cofactor>
</comment>
<comment type="activity regulation">
    <text evidence="1">Feedback inhibited by histidine.</text>
</comment>
<comment type="pathway">
    <text evidence="1">Amino-acid biosynthesis; L-histidine biosynthesis; L-histidine from 5-phospho-alpha-D-ribose 1-diphosphate: step 1/9.</text>
</comment>
<comment type="subcellular location">
    <subcellularLocation>
        <location evidence="1">Cytoplasm</location>
    </subcellularLocation>
</comment>
<comment type="similarity">
    <text evidence="1">Belongs to the ATP phosphoribosyltransferase family. Long subfamily.</text>
</comment>
<keyword id="KW-0002">3D-structure</keyword>
<keyword id="KW-0028">Amino-acid biosynthesis</keyword>
<keyword id="KW-0067">ATP-binding</keyword>
<keyword id="KW-0963">Cytoplasm</keyword>
<keyword id="KW-0328">Glycosyltransferase</keyword>
<keyword id="KW-0368">Histidine biosynthesis</keyword>
<keyword id="KW-0460">Magnesium</keyword>
<keyword id="KW-0479">Metal-binding</keyword>
<keyword id="KW-0547">Nucleotide-binding</keyword>
<keyword id="KW-0808">Transferase</keyword>
<evidence type="ECO:0000255" key="1">
    <source>
        <dbReference type="HAMAP-Rule" id="MF_00079"/>
    </source>
</evidence>
<evidence type="ECO:0007829" key="2">
    <source>
        <dbReference type="PDB" id="4YB6"/>
    </source>
</evidence>
<evidence type="ECO:0007829" key="3">
    <source>
        <dbReference type="PDB" id="5UB9"/>
    </source>
</evidence>
<proteinExistence type="evidence at protein level"/>
<name>HIS1_CAMJR</name>
<sequence>MQENTRLRIAIQKSGRLSKESIELLSECGVKMHIHEQSLIAFSTNLPIDILRVRDDDIPGLIFDGVVDLGIIGENVLEENELERQSLGENPSYKLLKKLDFGYCRLSLALPQENKFQNLKDFEGLRIATSYPQLLKRFMKENGINYKNCTLTGSVEVAPRANLADAICDLVSSGATLQANNLKEVKVIYESRACLIQKENALSKEKQALVDKIMLRVAGVMQARESKYIMLHAPKEKLDKIQALLPGVERPTILPLAHDEKNVALHMVSKENLFWETMEALKEEGASSILVLPIEKMLK</sequence>
<accession>Q5HSJ4</accession>